<name>TFB5_ASPFU</name>
<protein>
    <recommendedName>
        <fullName>General transcription and DNA repair factor IIH subunit tfb5</fullName>
        <shortName>TFIIH subunit tfb5</shortName>
    </recommendedName>
    <alternativeName>
        <fullName>RNA polymerase II transcription factor B subunit 5</fullName>
    </alternativeName>
</protein>
<sequence length="72" mass="8409">MPRAIKGVLIECDPSVKAIILKYDEESHDYIVEDLDDDRHLVIKESQLQNLKERLGRELDEKVMQPEESESE</sequence>
<dbReference type="EMBL" id="AAHF01000002">
    <property type="protein sequence ID" value="EAL92133.1"/>
    <property type="molecule type" value="Genomic_DNA"/>
</dbReference>
<dbReference type="RefSeq" id="XP_754171.1">
    <property type="nucleotide sequence ID" value="XM_749078.1"/>
</dbReference>
<dbReference type="SMR" id="Q4WYX0"/>
<dbReference type="FunCoup" id="Q4WYX0">
    <property type="interactions" value="145"/>
</dbReference>
<dbReference type="STRING" id="330879.Q4WYX0"/>
<dbReference type="EnsemblFungi" id="EAL92133">
    <property type="protein sequence ID" value="EAL92133"/>
    <property type="gene ID" value="AFUA_3G14550"/>
</dbReference>
<dbReference type="GeneID" id="3512138"/>
<dbReference type="KEGG" id="afm:AFUA_3G14550"/>
<dbReference type="VEuPathDB" id="FungiDB:Afu3g14550"/>
<dbReference type="eggNOG" id="KOG3451">
    <property type="taxonomic scope" value="Eukaryota"/>
</dbReference>
<dbReference type="HOGENOM" id="CLU_166246_3_1_1"/>
<dbReference type="InParanoid" id="Q4WYX0"/>
<dbReference type="OMA" id="IYNPMDE"/>
<dbReference type="OrthoDB" id="354at2759"/>
<dbReference type="Proteomes" id="UP000002530">
    <property type="component" value="Chromosome 3"/>
</dbReference>
<dbReference type="GO" id="GO:0000439">
    <property type="term" value="C:transcription factor TFIIH core complex"/>
    <property type="evidence" value="ECO:0000318"/>
    <property type="project" value="GO_Central"/>
</dbReference>
<dbReference type="GO" id="GO:0005675">
    <property type="term" value="C:transcription factor TFIIH holo complex"/>
    <property type="evidence" value="ECO:0000318"/>
    <property type="project" value="GO_Central"/>
</dbReference>
<dbReference type="GO" id="GO:0006294">
    <property type="term" value="P:nucleotide-excision repair, preincision complex assembly"/>
    <property type="evidence" value="ECO:0000318"/>
    <property type="project" value="GO_Central"/>
</dbReference>
<dbReference type="GO" id="GO:0006366">
    <property type="term" value="P:transcription by RNA polymerase II"/>
    <property type="evidence" value="ECO:0000318"/>
    <property type="project" value="GO_Central"/>
</dbReference>
<dbReference type="GO" id="GO:0006367">
    <property type="term" value="P:transcription initiation at RNA polymerase II promoter"/>
    <property type="evidence" value="ECO:0007669"/>
    <property type="project" value="InterPro"/>
</dbReference>
<dbReference type="FunFam" id="3.30.70.1220:FF:000002">
    <property type="entry name" value="RNA polymerase II transcription factor B subunit 5"/>
    <property type="match status" value="1"/>
</dbReference>
<dbReference type="Gene3D" id="3.30.70.1220">
    <property type="entry name" value="TFB5-like"/>
    <property type="match status" value="1"/>
</dbReference>
<dbReference type="InterPro" id="IPR035935">
    <property type="entry name" value="TFB5-like_sf"/>
</dbReference>
<dbReference type="InterPro" id="IPR009400">
    <property type="entry name" value="TFIIH_TTDA/Tfb5"/>
</dbReference>
<dbReference type="PANTHER" id="PTHR28580">
    <property type="entry name" value="GENERAL TRANSCRIPTION FACTOR IIH SUBUNIT 5"/>
    <property type="match status" value="1"/>
</dbReference>
<dbReference type="PANTHER" id="PTHR28580:SF1">
    <property type="entry name" value="GENERAL TRANSCRIPTION FACTOR IIH SUBUNIT 5"/>
    <property type="match status" value="1"/>
</dbReference>
<dbReference type="Pfam" id="PF06331">
    <property type="entry name" value="Tfb5"/>
    <property type="match status" value="1"/>
</dbReference>
<dbReference type="SMART" id="SM01395">
    <property type="entry name" value="Tbf5"/>
    <property type="match status" value="1"/>
</dbReference>
<dbReference type="SUPFAM" id="SSF142897">
    <property type="entry name" value="TFB5-like"/>
    <property type="match status" value="1"/>
</dbReference>
<organism>
    <name type="scientific">Aspergillus fumigatus (strain ATCC MYA-4609 / CBS 101355 / FGSC A1100 / Af293)</name>
    <name type="common">Neosartorya fumigata</name>
    <dbReference type="NCBI Taxonomy" id="330879"/>
    <lineage>
        <taxon>Eukaryota</taxon>
        <taxon>Fungi</taxon>
        <taxon>Dikarya</taxon>
        <taxon>Ascomycota</taxon>
        <taxon>Pezizomycotina</taxon>
        <taxon>Eurotiomycetes</taxon>
        <taxon>Eurotiomycetidae</taxon>
        <taxon>Eurotiales</taxon>
        <taxon>Aspergillaceae</taxon>
        <taxon>Aspergillus</taxon>
        <taxon>Aspergillus subgen. Fumigati</taxon>
    </lineage>
</organism>
<keyword id="KW-0227">DNA damage</keyword>
<keyword id="KW-0234">DNA repair</keyword>
<keyword id="KW-0539">Nucleus</keyword>
<keyword id="KW-1185">Reference proteome</keyword>
<keyword id="KW-0804">Transcription</keyword>
<keyword id="KW-0805">Transcription regulation</keyword>
<gene>
    <name type="primary">tfb5</name>
    <name type="ORF">AFUA_3G14550</name>
</gene>
<accession>Q4WYX0</accession>
<reference key="1">
    <citation type="journal article" date="2005" name="Nature">
        <title>Genomic sequence of the pathogenic and allergenic filamentous fungus Aspergillus fumigatus.</title>
        <authorList>
            <person name="Nierman W.C."/>
            <person name="Pain A."/>
            <person name="Anderson M.J."/>
            <person name="Wortman J.R."/>
            <person name="Kim H.S."/>
            <person name="Arroyo J."/>
            <person name="Berriman M."/>
            <person name="Abe K."/>
            <person name="Archer D.B."/>
            <person name="Bermejo C."/>
            <person name="Bennett J.W."/>
            <person name="Bowyer P."/>
            <person name="Chen D."/>
            <person name="Collins M."/>
            <person name="Coulsen R."/>
            <person name="Davies R."/>
            <person name="Dyer P.S."/>
            <person name="Farman M.L."/>
            <person name="Fedorova N."/>
            <person name="Fedorova N.D."/>
            <person name="Feldblyum T.V."/>
            <person name="Fischer R."/>
            <person name="Fosker N."/>
            <person name="Fraser A."/>
            <person name="Garcia J.L."/>
            <person name="Garcia M.J."/>
            <person name="Goble A."/>
            <person name="Goldman G.H."/>
            <person name="Gomi K."/>
            <person name="Griffith-Jones S."/>
            <person name="Gwilliam R."/>
            <person name="Haas B.J."/>
            <person name="Haas H."/>
            <person name="Harris D.E."/>
            <person name="Horiuchi H."/>
            <person name="Huang J."/>
            <person name="Humphray S."/>
            <person name="Jimenez J."/>
            <person name="Keller N."/>
            <person name="Khouri H."/>
            <person name="Kitamoto K."/>
            <person name="Kobayashi T."/>
            <person name="Konzack S."/>
            <person name="Kulkarni R."/>
            <person name="Kumagai T."/>
            <person name="Lafton A."/>
            <person name="Latge J.-P."/>
            <person name="Li W."/>
            <person name="Lord A."/>
            <person name="Lu C."/>
            <person name="Majoros W.H."/>
            <person name="May G.S."/>
            <person name="Miller B.L."/>
            <person name="Mohamoud Y."/>
            <person name="Molina M."/>
            <person name="Monod M."/>
            <person name="Mouyna I."/>
            <person name="Mulligan S."/>
            <person name="Murphy L.D."/>
            <person name="O'Neil S."/>
            <person name="Paulsen I."/>
            <person name="Penalva M.A."/>
            <person name="Pertea M."/>
            <person name="Price C."/>
            <person name="Pritchard B.L."/>
            <person name="Quail M.A."/>
            <person name="Rabbinowitsch E."/>
            <person name="Rawlins N."/>
            <person name="Rajandream M.A."/>
            <person name="Reichard U."/>
            <person name="Renauld H."/>
            <person name="Robson G.D."/>
            <person name="Rodriguez de Cordoba S."/>
            <person name="Rodriguez-Pena J.M."/>
            <person name="Ronning C.M."/>
            <person name="Rutter S."/>
            <person name="Salzberg S.L."/>
            <person name="Sanchez M."/>
            <person name="Sanchez-Ferrero J.C."/>
            <person name="Saunders D."/>
            <person name="Seeger K."/>
            <person name="Squares R."/>
            <person name="Squares S."/>
            <person name="Takeuchi M."/>
            <person name="Tekaia F."/>
            <person name="Turner G."/>
            <person name="Vazquez de Aldana C.R."/>
            <person name="Weidman J."/>
            <person name="White O."/>
            <person name="Woodward J.R."/>
            <person name="Yu J.-H."/>
            <person name="Fraser C.M."/>
            <person name="Galagan J.E."/>
            <person name="Asai K."/>
            <person name="Machida M."/>
            <person name="Hall N."/>
            <person name="Barrell B.G."/>
            <person name="Denning D.W."/>
        </authorList>
    </citation>
    <scope>NUCLEOTIDE SEQUENCE [LARGE SCALE GENOMIC DNA]</scope>
    <source>
        <strain>ATCC MYA-4609 / CBS 101355 / FGSC A1100 / Af293</strain>
    </source>
</reference>
<comment type="function">
    <text evidence="2">Component of the general transcription and DNA repair factor IIH (TFIIH) core complex, which is involved in general and transcription-coupled nucleotide excision repair (NER) of damaged DNA and, when complexed to TFIIK, in RNA transcription by RNA polymerase II. In NER, TFIIH acts by opening DNA around the lesion to allow the excision of the damaged oligonucleotide and its replacement by a new DNA fragment. In transcription, TFIIH has an essential role in transcription initiation. When the pre-initiation complex (PIC) has been established, TFIIH is required for promoter opening and promoter escape. Phosphorylation of the C-terminal tail (CTD) of the largest subunit of RNA polymerase II by the kinase module TFIIK controls the initiation of transcription.</text>
</comment>
<comment type="subunit">
    <text evidence="2">Component of the 7-subunit TFIIH core complex composed of XPB/ssl2, XPD/rad3, ssl1, tfb1, tfb2, tfb4 and tfb5, which is active in NER. The core complex associates with the 3-subunit CTD-kinase module TFIIK composed of ccl1, kin28 and tfb3 to form the 10-subunit holoenzyme (holo-TFIIH) active in transcription.</text>
</comment>
<comment type="subcellular location">
    <subcellularLocation>
        <location evidence="1">Nucleus</location>
    </subcellularLocation>
</comment>
<comment type="similarity">
    <text evidence="3">Belongs to the TFB5 family.</text>
</comment>
<feature type="chain" id="PRO_0000119277" description="General transcription and DNA repair factor IIH subunit tfb5">
    <location>
        <begin position="1"/>
        <end position="72"/>
    </location>
</feature>
<evidence type="ECO:0000250" key="1"/>
<evidence type="ECO:0000250" key="2">
    <source>
        <dbReference type="UniProtKB" id="Q3E7C1"/>
    </source>
</evidence>
<evidence type="ECO:0000305" key="3"/>
<proteinExistence type="inferred from homology"/>